<evidence type="ECO:0000256" key="1">
    <source>
        <dbReference type="SAM" id="MobiDB-lite"/>
    </source>
</evidence>
<evidence type="ECO:0000269" key="2">
    <source>
    </source>
</evidence>
<evidence type="ECO:0000269" key="3">
    <source ref="6"/>
</evidence>
<evidence type="ECO:0000305" key="4"/>
<comment type="interaction">
    <interactant intactId="EBI-2877705">
        <id>Q969Q0</id>
    </interactant>
    <interactant intactId="EBI-10172290">
        <id>P60409</id>
        <label>KRTAP10-7</label>
    </interactant>
    <organismsDiffer>false</organismsDiffer>
    <experiments>3</experiments>
</comment>
<comment type="subcellular location">
    <subcellularLocation>
        <location evidence="4">Cytoplasm</location>
    </subcellularLocation>
</comment>
<comment type="tissue specificity">
    <text evidence="2">Ubiquitously expressed.</text>
</comment>
<comment type="miscellaneous">
    <text>This gene has no introns in its coding regions, and therefore, was most likely produced by retrotransposition of the original X-linked gene during evolution.</text>
</comment>
<comment type="similarity">
    <text evidence="4">Belongs to the eukaryotic ribosomal protein eL42 family.</text>
</comment>
<accession>Q969Q0</accession>
<accession>Q3B7A5</accession>
<protein>
    <recommendedName>
        <fullName evidence="4">Ribosomal protein eL42-like</fullName>
    </recommendedName>
    <alternativeName>
        <fullName>60S ribosomal protein L36a-like</fullName>
    </alternativeName>
    <alternativeName>
        <fullName>Large ribosomal subunit protein eL42-like</fullName>
    </alternativeName>
</protein>
<sequence length="106" mass="12469">MVNVPKTRRTFCKKCGKHQPHKVTQYKKGKDSLYAQGRRRYDRKQSGYGGQTKPIFRKKAKTTKKIVLRLECVEPNCRSKRMLAIKRCKHFELGGDKKRKGQVIQF</sequence>
<dbReference type="EMBL" id="M15661">
    <property type="protein sequence ID" value="AAA36589.1"/>
    <property type="molecule type" value="mRNA"/>
</dbReference>
<dbReference type="EMBL" id="AB063609">
    <property type="protein sequence ID" value="BAC19836.1"/>
    <property type="molecule type" value="mRNA"/>
</dbReference>
<dbReference type="EMBL" id="CR542166">
    <property type="protein sequence ID" value="CAG46963.1"/>
    <property type="molecule type" value="mRNA"/>
</dbReference>
<dbReference type="EMBL" id="BC000741">
    <property type="protein sequence ID" value="AAH00741.1"/>
    <property type="molecule type" value="mRNA"/>
</dbReference>
<dbReference type="EMBL" id="BC003145">
    <property type="protein sequence ID" value="AAH03145.1"/>
    <property type="molecule type" value="mRNA"/>
</dbReference>
<dbReference type="EMBL" id="BC070207">
    <property type="protein sequence ID" value="AAH70207.1"/>
    <property type="molecule type" value="mRNA"/>
</dbReference>
<dbReference type="EMBL" id="BC107716">
    <property type="protein sequence ID" value="AAI07717.1"/>
    <property type="molecule type" value="mRNA"/>
</dbReference>
<dbReference type="CCDS" id="CCDS9689.1"/>
<dbReference type="PIR" id="A25560">
    <property type="entry name" value="R6HU36"/>
</dbReference>
<dbReference type="RefSeq" id="NP_000992.1">
    <property type="nucleotide sequence ID" value="NM_001001.5"/>
</dbReference>
<dbReference type="SMR" id="Q969Q0"/>
<dbReference type="BioGRID" id="112085">
    <property type="interactions" value="348"/>
</dbReference>
<dbReference type="ComplexPortal" id="CPX-5183">
    <property type="entry name" value="60S cytosolic large ribosomal subunit"/>
</dbReference>
<dbReference type="ComplexPortal" id="CPX-7664">
    <property type="entry name" value="60S cytosolic large ribosomal subunit, testis-specific variant"/>
</dbReference>
<dbReference type="FunCoup" id="Q969Q0">
    <property type="interactions" value="2191"/>
</dbReference>
<dbReference type="IntAct" id="Q969Q0">
    <property type="interactions" value="69"/>
</dbReference>
<dbReference type="MINT" id="Q969Q0"/>
<dbReference type="STRING" id="9606.ENSP00000346012"/>
<dbReference type="GlyGen" id="Q969Q0">
    <property type="glycosylation" value="1 site, 1 O-linked glycan (1 site)"/>
</dbReference>
<dbReference type="iPTMnet" id="Q969Q0"/>
<dbReference type="PhosphoSitePlus" id="Q969Q0"/>
<dbReference type="SwissPalm" id="Q969Q0"/>
<dbReference type="BioMuta" id="RPL36AL"/>
<dbReference type="DMDM" id="57013007"/>
<dbReference type="jPOST" id="Q969Q0"/>
<dbReference type="MassIVE" id="Q969Q0"/>
<dbReference type="PaxDb" id="9606-ENSP00000346012"/>
<dbReference type="PeptideAtlas" id="Q969Q0"/>
<dbReference type="ProteomicsDB" id="75813"/>
<dbReference type="Pumba" id="Q969Q0"/>
<dbReference type="TopDownProteomics" id="Q969Q0"/>
<dbReference type="Antibodypedia" id="61338">
    <property type="antibodies" value="141 antibodies from 20 providers"/>
</dbReference>
<dbReference type="DNASU" id="6166"/>
<dbReference type="Ensembl" id="ENST00000298289.7">
    <property type="protein sequence ID" value="ENSP00000346012.5"/>
    <property type="gene ID" value="ENSG00000165502.7"/>
</dbReference>
<dbReference type="GeneID" id="6166"/>
<dbReference type="KEGG" id="hsa:6166"/>
<dbReference type="MANE-Select" id="ENST00000298289.7">
    <property type="protein sequence ID" value="ENSP00000346012.5"/>
    <property type="RefSeq nucleotide sequence ID" value="NM_001001.5"/>
    <property type="RefSeq protein sequence ID" value="NP_000992.1"/>
</dbReference>
<dbReference type="UCSC" id="uc001wwq.4">
    <property type="organism name" value="human"/>
</dbReference>
<dbReference type="AGR" id="HGNC:10346"/>
<dbReference type="CTD" id="6166"/>
<dbReference type="GeneCards" id="RPL36AL"/>
<dbReference type="HGNC" id="HGNC:10346">
    <property type="gene designation" value="RPL36AL"/>
</dbReference>
<dbReference type="HPA" id="ENSG00000165502">
    <property type="expression patterns" value="Low tissue specificity"/>
</dbReference>
<dbReference type="MIM" id="180469">
    <property type="type" value="gene"/>
</dbReference>
<dbReference type="neXtProt" id="NX_Q969Q0"/>
<dbReference type="OpenTargets" id="ENSG00000165502"/>
<dbReference type="PharmGKB" id="PA34732"/>
<dbReference type="VEuPathDB" id="HostDB:ENSG00000165502"/>
<dbReference type="GeneTree" id="ENSGT00940000161656"/>
<dbReference type="HOGENOM" id="CLU_114645_2_1_1"/>
<dbReference type="InParanoid" id="Q969Q0"/>
<dbReference type="OMA" id="DILVMTN"/>
<dbReference type="OrthoDB" id="9511283at2759"/>
<dbReference type="PAN-GO" id="Q969Q0">
    <property type="GO annotations" value="1 GO annotation based on evolutionary models"/>
</dbReference>
<dbReference type="PhylomeDB" id="Q969Q0"/>
<dbReference type="TreeFam" id="TF300213"/>
<dbReference type="PathwayCommons" id="Q969Q0"/>
<dbReference type="Reactome" id="R-HSA-156827">
    <property type="pathway name" value="L13a-mediated translational silencing of Ceruloplasmin expression"/>
</dbReference>
<dbReference type="Reactome" id="R-HSA-156902">
    <property type="pathway name" value="Peptide chain elongation"/>
</dbReference>
<dbReference type="Reactome" id="R-HSA-1799339">
    <property type="pathway name" value="SRP-dependent cotranslational protein targeting to membrane"/>
</dbReference>
<dbReference type="Reactome" id="R-HSA-192823">
    <property type="pathway name" value="Viral mRNA Translation"/>
</dbReference>
<dbReference type="Reactome" id="R-HSA-2408557">
    <property type="pathway name" value="Selenocysteine synthesis"/>
</dbReference>
<dbReference type="Reactome" id="R-HSA-6791226">
    <property type="pathway name" value="Major pathway of rRNA processing in the nucleolus and cytosol"/>
</dbReference>
<dbReference type="Reactome" id="R-HSA-72689">
    <property type="pathway name" value="Formation of a pool of free 40S subunits"/>
</dbReference>
<dbReference type="Reactome" id="R-HSA-72706">
    <property type="pathway name" value="GTP hydrolysis and joining of the 60S ribosomal subunit"/>
</dbReference>
<dbReference type="Reactome" id="R-HSA-72764">
    <property type="pathway name" value="Eukaryotic Translation Termination"/>
</dbReference>
<dbReference type="Reactome" id="R-HSA-9010553">
    <property type="pathway name" value="Regulation of expression of SLITs and ROBOs"/>
</dbReference>
<dbReference type="Reactome" id="R-HSA-9633012">
    <property type="pathway name" value="Response of EIF2AK4 (GCN2) to amino acid deficiency"/>
</dbReference>
<dbReference type="Reactome" id="R-HSA-975956">
    <property type="pathway name" value="Nonsense Mediated Decay (NMD) independent of the Exon Junction Complex (EJC)"/>
</dbReference>
<dbReference type="Reactome" id="R-HSA-975957">
    <property type="pathway name" value="Nonsense Mediated Decay (NMD) enhanced by the Exon Junction Complex (EJC)"/>
</dbReference>
<dbReference type="SignaLink" id="Q969Q0"/>
<dbReference type="SIGNOR" id="Q969Q0"/>
<dbReference type="BioGRID-ORCS" id="6166">
    <property type="hits" value="426 hits in 1068 CRISPR screens"/>
</dbReference>
<dbReference type="CD-CODE" id="B5B9A610">
    <property type="entry name" value="PML body"/>
</dbReference>
<dbReference type="ChiTaRS" id="RPL36AL">
    <property type="organism name" value="human"/>
</dbReference>
<dbReference type="GenomeRNAi" id="6166"/>
<dbReference type="Pharos" id="Q969Q0">
    <property type="development level" value="Tbio"/>
</dbReference>
<dbReference type="PRO" id="PR:Q969Q0"/>
<dbReference type="Proteomes" id="UP000005640">
    <property type="component" value="Chromosome 14"/>
</dbReference>
<dbReference type="RNAct" id="Q969Q0">
    <property type="molecule type" value="protein"/>
</dbReference>
<dbReference type="Bgee" id="ENSG00000165502">
    <property type="expression patterns" value="Expressed in germinal epithelium of ovary and 205 other cell types or tissues"/>
</dbReference>
<dbReference type="GO" id="GO:0005829">
    <property type="term" value="C:cytosol"/>
    <property type="evidence" value="ECO:0000314"/>
    <property type="project" value="HPA"/>
</dbReference>
<dbReference type="GO" id="GO:0022625">
    <property type="term" value="C:cytosolic large ribosomal subunit"/>
    <property type="evidence" value="ECO:0000318"/>
    <property type="project" value="GO_Central"/>
</dbReference>
<dbReference type="GO" id="GO:0005783">
    <property type="term" value="C:endoplasmic reticulum"/>
    <property type="evidence" value="ECO:0000314"/>
    <property type="project" value="HPA"/>
</dbReference>
<dbReference type="GO" id="GO:0005634">
    <property type="term" value="C:nucleus"/>
    <property type="evidence" value="ECO:0000314"/>
    <property type="project" value="BHF-UCL"/>
</dbReference>
<dbReference type="GO" id="GO:0005886">
    <property type="term" value="C:plasma membrane"/>
    <property type="evidence" value="ECO:0000314"/>
    <property type="project" value="HPA"/>
</dbReference>
<dbReference type="GO" id="GO:0003735">
    <property type="term" value="F:structural constituent of ribosome"/>
    <property type="evidence" value="ECO:0007669"/>
    <property type="project" value="InterPro"/>
</dbReference>
<dbReference type="GO" id="GO:0006412">
    <property type="term" value="P:translation"/>
    <property type="evidence" value="ECO:0007669"/>
    <property type="project" value="InterPro"/>
</dbReference>
<dbReference type="FunFam" id="3.10.450.80:FF:000001">
    <property type="entry name" value="60S ribosomal protein L44"/>
    <property type="match status" value="1"/>
</dbReference>
<dbReference type="Gene3D" id="3.10.450.80">
    <property type="match status" value="1"/>
</dbReference>
<dbReference type="InterPro" id="IPR000552">
    <property type="entry name" value="Ribosomal_eL44"/>
</dbReference>
<dbReference type="InterPro" id="IPR053708">
    <property type="entry name" value="Ribosomal_LSU_eL42"/>
</dbReference>
<dbReference type="InterPro" id="IPR011332">
    <property type="entry name" value="Ribosomal_zn-bd"/>
</dbReference>
<dbReference type="PANTHER" id="PTHR10369">
    <property type="entry name" value="60S RIBOSOMAL PROTEIN L36A/L44"/>
    <property type="match status" value="1"/>
</dbReference>
<dbReference type="Pfam" id="PF00935">
    <property type="entry name" value="Ribosomal_L44"/>
    <property type="match status" value="1"/>
</dbReference>
<dbReference type="SUPFAM" id="SSF57829">
    <property type="entry name" value="Zn-binding ribosomal proteins"/>
    <property type="match status" value="1"/>
</dbReference>
<dbReference type="PROSITE" id="PS01172">
    <property type="entry name" value="RIBOSOMAL_L44E"/>
    <property type="match status" value="1"/>
</dbReference>
<name>RL36L_HUMAN</name>
<proteinExistence type="evidence at protein level"/>
<keyword id="KW-0963">Cytoplasm</keyword>
<keyword id="KW-0903">Direct protein sequencing</keyword>
<keyword id="KW-0488">Methylation</keyword>
<keyword id="KW-1267">Proteomics identification</keyword>
<keyword id="KW-1185">Reference proteome</keyword>
<keyword id="KW-0687">Ribonucleoprotein</keyword>
<keyword id="KW-0689">Ribosomal protein</keyword>
<gene>
    <name type="primary">RPL36AL</name>
</gene>
<reference key="1">
    <citation type="journal article" date="1986" name="Gene">
        <title>Characterisation of an mRNA encoding a human ribosomal protein homologous to the yeast L44 ribosomal protein.</title>
        <authorList>
            <person name="Davies M.S."/>
            <person name="Henney A."/>
            <person name="Ward W.H.J."/>
            <person name="Craig R.K."/>
        </authorList>
    </citation>
    <scope>NUCLEOTIDE SEQUENCE [MRNA]</scope>
</reference>
<reference key="2">
    <citation type="journal article" date="2002" name="Nucleic Acids Res.">
        <title>Functional second genes generated by retrotransposition of the X-linked ribosomal protein genes.</title>
        <authorList>
            <person name="Uechi T."/>
            <person name="Maeda N."/>
            <person name="Tanaka T."/>
            <person name="Kenmochi N."/>
        </authorList>
    </citation>
    <scope>NUCLEOTIDE SEQUENCE [MRNA]</scope>
    <scope>TISSUE SPECIFICITY</scope>
</reference>
<reference key="3">
    <citation type="submission" date="2004-06" db="EMBL/GenBank/DDBJ databases">
        <title>Cloning of human full open reading frames in Gateway(TM) system entry vector (pDONR201).</title>
        <authorList>
            <person name="Halleck A."/>
            <person name="Ebert L."/>
            <person name="Mkoundinya M."/>
            <person name="Schick M."/>
            <person name="Eisenstein S."/>
            <person name="Neubert P."/>
            <person name="Kstrang K."/>
            <person name="Schatten R."/>
            <person name="Shen B."/>
            <person name="Henze S."/>
            <person name="Mar W."/>
            <person name="Korn B."/>
            <person name="Zuo D."/>
            <person name="Hu Y."/>
            <person name="LaBaer J."/>
        </authorList>
    </citation>
    <scope>NUCLEOTIDE SEQUENCE [LARGE SCALE MRNA]</scope>
</reference>
<reference key="4">
    <citation type="journal article" date="2004" name="Genome Res.">
        <title>The status, quality, and expansion of the NIH full-length cDNA project: the Mammalian Gene Collection (MGC).</title>
        <authorList>
            <consortium name="The MGC Project Team"/>
        </authorList>
    </citation>
    <scope>NUCLEOTIDE SEQUENCE [LARGE SCALE MRNA]</scope>
    <source>
        <tissue>Kidney</tissue>
        <tissue>Skeletal muscle</tissue>
    </source>
</reference>
<reference key="5">
    <citation type="submission" date="2008-03" db="UniProtKB">
        <authorList>
            <person name="Bienvenut W.V."/>
            <person name="Vousden K.H."/>
            <person name="Lukashchuk N."/>
        </authorList>
    </citation>
    <scope>PROTEIN SEQUENCE OF 29-38 AND 100-106</scope>
    <scope>IDENTIFICATION BY MASS SPECTROMETRY</scope>
    <source>
        <tissue>Lung carcinoma</tissue>
    </source>
</reference>
<reference key="6">
    <citation type="submission" date="2009-03" db="UniProtKB">
        <authorList>
            <person name="Bienvenut W.V."/>
            <person name="Waridel P."/>
            <person name="Quadroni M."/>
        </authorList>
    </citation>
    <scope>PROTEIN SEQUENCE OF 45-57; 70-78 AND 100-106</scope>
    <scope>METHYLATION AT LYS-53</scope>
    <scope>IDENTIFICATION BY MASS SPECTROMETRY</scope>
    <source>
        <tissue>Cervix carcinoma</tissue>
    </source>
</reference>
<reference key="7">
    <citation type="journal article" date="2011" name="BMC Syst. Biol.">
        <title>Initial characterization of the human central proteome.</title>
        <authorList>
            <person name="Burkard T.R."/>
            <person name="Planyavsky M."/>
            <person name="Kaupe I."/>
            <person name="Breitwieser F.P."/>
            <person name="Buerckstuemmer T."/>
            <person name="Bennett K.L."/>
            <person name="Superti-Furga G."/>
            <person name="Colinge J."/>
        </authorList>
    </citation>
    <scope>IDENTIFICATION BY MASS SPECTROMETRY [LARGE SCALE ANALYSIS]</scope>
</reference>
<organism>
    <name type="scientific">Homo sapiens</name>
    <name type="common">Human</name>
    <dbReference type="NCBI Taxonomy" id="9606"/>
    <lineage>
        <taxon>Eukaryota</taxon>
        <taxon>Metazoa</taxon>
        <taxon>Chordata</taxon>
        <taxon>Craniata</taxon>
        <taxon>Vertebrata</taxon>
        <taxon>Euteleostomi</taxon>
        <taxon>Mammalia</taxon>
        <taxon>Eutheria</taxon>
        <taxon>Euarchontoglires</taxon>
        <taxon>Primates</taxon>
        <taxon>Haplorrhini</taxon>
        <taxon>Catarrhini</taxon>
        <taxon>Hominidae</taxon>
        <taxon>Homo</taxon>
    </lineage>
</organism>
<feature type="chain" id="PRO_0000149118" description="Ribosomal protein eL42-like">
    <location>
        <begin position="1"/>
        <end position="106"/>
    </location>
</feature>
<feature type="region of interest" description="Disordered" evidence="1">
    <location>
        <begin position="26"/>
        <end position="53"/>
    </location>
</feature>
<feature type="modified residue" description="N6-methyllysine" evidence="3">
    <location>
        <position position="53"/>
    </location>
</feature>
<feature type="sequence variant" id="VAR_051809" description="In dbSNP:rs3088024.">
    <original>I</original>
    <variation>V</variation>
    <location>
        <position position="66"/>
    </location>
</feature>